<accession>P04179</accession>
<accession>B2R7R1</accession>
<accession>B3KUK2</accession>
<accession>B4DL20</accession>
<accession>B4E3K9</accession>
<accession>E1P5A9</accession>
<accession>P78434</accession>
<accession>Q16792</accession>
<accession>Q5TCM1</accession>
<accession>Q96EE6</accession>
<accession>Q9P2Z3</accession>
<gene>
    <name type="primary">SOD2</name>
</gene>
<comment type="function">
    <text evidence="2">Destroys superoxide anion radicals which are normally produced within the cells and which are toxic to biological systems.</text>
</comment>
<comment type="catalytic activity">
    <reaction evidence="2 3 4 9 15 17 18">
        <text>2 superoxide + 2 H(+) = H2O2 + O2</text>
        <dbReference type="Rhea" id="RHEA:20696"/>
        <dbReference type="ChEBI" id="CHEBI:15378"/>
        <dbReference type="ChEBI" id="CHEBI:15379"/>
        <dbReference type="ChEBI" id="CHEBI:16240"/>
        <dbReference type="ChEBI" id="CHEBI:18421"/>
        <dbReference type="EC" id="1.15.1.1"/>
    </reaction>
</comment>
<comment type="cofactor">
    <cofactor evidence="3 4 6 9 17 18">
        <name>Mn(2+)</name>
        <dbReference type="ChEBI" id="CHEBI:29035"/>
    </cofactor>
    <text evidence="3 4 6 9 17 18">Binds 1 Mn(2+) ion per subunit.</text>
</comment>
<comment type="subunit">
    <text evidence="9">Homotetramer.</text>
</comment>
<comment type="interaction">
    <interactant intactId="EBI-716989">
        <id>P04179</id>
    </interactant>
    <interactant intactId="EBI-739624">
        <id>Q8NHQ1</id>
        <label>CEP70</label>
    </interactant>
    <organismsDiffer>false</organismsDiffer>
    <experiments>3</experiments>
</comment>
<comment type="interaction">
    <interactant intactId="EBI-716989">
        <id>P04179</id>
    </interactant>
    <interactant intactId="EBI-716989">
        <id>P04179</id>
        <label>SOD2</label>
    </interactant>
    <organismsDiffer>false</organismsDiffer>
    <experiments>2</experiments>
</comment>
<comment type="subcellular location">
    <subcellularLocation>
        <location>Mitochondrion matrix</location>
    </subcellularLocation>
</comment>
<comment type="alternative products">
    <event type="alternative splicing"/>
    <isoform>
        <id>P04179-1</id>
        <name>1</name>
        <sequence type="displayed"/>
    </isoform>
    <isoform>
        <id>P04179-2</id>
        <name>2</name>
        <sequence type="described" ref="VSP_042558"/>
    </isoform>
    <isoform>
        <id>P04179-3</id>
        <name>3</name>
        <sequence type="described" ref="VSP_053762"/>
    </isoform>
    <isoform>
        <id>P04179-4</id>
        <name>4</name>
        <sequence type="described" ref="VSP_053761"/>
    </isoform>
</comment>
<comment type="induction">
    <text evidence="10">Expression is regulated by KRIT1.</text>
</comment>
<comment type="PTM">
    <text evidence="2 7">Nitrated under oxidative stress. Nitration coupled with oxidation inhibits the catalytic activity.</text>
</comment>
<comment type="PTM">
    <text evidence="1">Acetylation at Lys-122 decreases enzymatic activity. Deacetylated by SIRT3 upon exposure to ionizing radiations or after long fasting (By similarity).</text>
</comment>
<comment type="PTM">
    <text evidence="11">Polyubiquitinated; leading to proteasomal degradation. Deubiquitinated by USP36 which increases protein stability.</text>
</comment>
<comment type="disease" evidence="5 8">
    <disease id="DI-02759">
        <name>Microvascular complications of diabetes 6</name>
        <acronym>MVCD6</acronym>
        <description>Pathological conditions that develop in numerous tissues and organs as a consequence of diabetes mellitus. They include diabetic retinopathy, diabetic nephropathy leading to end-stage renal disease, and diabetic neuropathy. Diabetic retinopathy remains the major cause of new-onset blindness among diabetic adults. It is characterized by vascular permeability and increased tissue ischemia and angiogenesis.</description>
        <dbReference type="MIM" id="612634"/>
    </disease>
    <text>Disease susceptibility is associated with variants affecting the gene represented in this entry.</text>
</comment>
<comment type="similarity">
    <text evidence="21">Belongs to the iron/manganese superoxide dismutase family.</text>
</comment>
<comment type="online information" name="Wikipedia">
    <link uri="https://en.wikipedia.org/wiki/Superoxide_dismutase"/>
    <text>Superoxide dismutase entry</text>
</comment>
<keyword id="KW-0002">3D-structure</keyword>
<keyword id="KW-0007">Acetylation</keyword>
<keyword id="KW-0025">Alternative splicing</keyword>
<keyword id="KW-0903">Direct protein sequencing</keyword>
<keyword id="KW-0464">Manganese</keyword>
<keyword id="KW-0479">Metal-binding</keyword>
<keyword id="KW-0496">Mitochondrion</keyword>
<keyword id="KW-0944">Nitration</keyword>
<keyword id="KW-0560">Oxidoreductase</keyword>
<keyword id="KW-1267">Proteomics identification</keyword>
<keyword id="KW-1185">Reference proteome</keyword>
<keyword id="KW-0809">Transit peptide</keyword>
<keyword id="KW-0832">Ubl conjugation</keyword>
<reference key="1">
    <citation type="journal article" date="1989" name="Biochim. Biophys. Acta">
        <title>Synthesis and processing of the precursor for human mangano-superoxide dismutase.</title>
        <authorList>
            <person name="Wispe J.R."/>
            <person name="Clark J.C."/>
            <person name="Burhans M.S."/>
            <person name="Kropp K.E."/>
            <person name="Korfhagen T.R."/>
            <person name="Whitsett J.A."/>
        </authorList>
    </citation>
    <scope>NUCLEOTIDE SEQUENCE [MRNA] (ISOFORM 1)</scope>
</reference>
<reference key="2">
    <citation type="journal article" date="1987" name="Nucleic Acids Res.">
        <title>Human Mn superoxide dismutase cDNA sequence.</title>
        <authorList>
            <person name="Beck Y."/>
            <person name="Oren R."/>
            <person name="Amit B."/>
            <person name="Levanon A."/>
            <person name="Gorecki M."/>
            <person name="Hartman J.R."/>
        </authorList>
    </citation>
    <scope>NUCLEOTIDE SEQUENCE [MRNA] (ISOFORM 1)</scope>
</reference>
<reference key="3">
    <citation type="journal article" date="1988" name="Nucleic Acids Res.">
        <title>Isolation of cDNAs encoding human manganese superoxide dismutase.</title>
        <authorList>
            <person name="Heckl K."/>
        </authorList>
    </citation>
    <scope>NUCLEOTIDE SEQUENCE [MRNA] (ISOFORM 1)</scope>
</reference>
<reference key="4">
    <citation type="journal article" date="1988" name="FEBS Lett.">
        <title>Isolation and characterization of complementary DNAs encoding human manganese-containing superoxide dismutase.</title>
        <authorList>
            <person name="Ho Y.-S."/>
            <person name="Crapo J.D."/>
        </authorList>
    </citation>
    <scope>NUCLEOTIDE SEQUENCE [MRNA] (ISOFORM 1)</scope>
    <source>
        <tissue>Liver</tissue>
    </source>
</reference>
<reference key="5">
    <citation type="journal article" date="1990" name="Biochim. Biophys. Acta">
        <title>Manganese superoxide dismutase: nucleotide and deduced amino acid sequence of a cDNA encoding a new human transcript.</title>
        <authorList>
            <person name="Church S.L."/>
        </authorList>
    </citation>
    <scope>NUCLEOTIDE SEQUENCE [MRNA] (ISOFORM 1)</scope>
</reference>
<reference key="6">
    <citation type="journal article" date="1991" name="Cancer Res.">
        <title>Complementary DNA encoding human colon cancer manganese superoxide dismutase and the expression of its gene in human cells.</title>
        <authorList>
            <person name="St Clair D.K."/>
            <person name="Holland J.C."/>
        </authorList>
    </citation>
    <scope>NUCLEOTIDE SEQUENCE [MRNA] (ISOFORM 1)</scope>
    <source>
        <tissue>Colon</tissue>
    </source>
</reference>
<reference key="7">
    <citation type="journal article" date="1994" name="DNA Cell Biol.">
        <title>Molecular structure and organization of the human manganese superoxide dismutase gene.</title>
        <authorList>
            <person name="Wan X.S."/>
            <person name="Devalaraja M.N."/>
            <person name="St Clair D.K."/>
        </authorList>
    </citation>
    <scope>NUCLEOTIDE SEQUENCE [GENOMIC DNA]</scope>
</reference>
<reference key="8">
    <citation type="submission" date="2003-05" db="EMBL/GenBank/DDBJ databases">
        <title>Cloning of human full-length CDSs in BD Creator(TM) system donor vector.</title>
        <authorList>
            <person name="Kalnine N."/>
            <person name="Chen X."/>
            <person name="Rolfs A."/>
            <person name="Halleck A."/>
            <person name="Hines L."/>
            <person name="Eisenstein S."/>
            <person name="Koundinya M."/>
            <person name="Raphael J."/>
            <person name="Moreira D."/>
            <person name="Kelley T."/>
            <person name="LaBaer J."/>
            <person name="Lin Y."/>
            <person name="Phelan M."/>
            <person name="Farmer A."/>
        </authorList>
    </citation>
    <scope>NUCLEOTIDE SEQUENCE [LARGE SCALE MRNA] (ISOFORM 1)</scope>
</reference>
<reference key="9">
    <citation type="submission" date="2003-04" db="EMBL/GenBank/DDBJ databases">
        <authorList>
            <consortium name="NIEHS SNPs program"/>
        </authorList>
    </citation>
    <scope>NUCLEOTIDE SEQUENCE [GENOMIC DNA]</scope>
    <scope>VARIANTS ILE-10; VAL-66 AND TRP-156</scope>
</reference>
<reference key="10">
    <citation type="journal article" date="2004" name="Nat. Genet.">
        <title>Complete sequencing and characterization of 21,243 full-length human cDNAs.</title>
        <authorList>
            <person name="Ota T."/>
            <person name="Suzuki Y."/>
            <person name="Nishikawa T."/>
            <person name="Otsuki T."/>
            <person name="Sugiyama T."/>
            <person name="Irie R."/>
            <person name="Wakamatsu A."/>
            <person name="Hayashi K."/>
            <person name="Sato H."/>
            <person name="Nagai K."/>
            <person name="Kimura K."/>
            <person name="Makita H."/>
            <person name="Sekine M."/>
            <person name="Obayashi M."/>
            <person name="Nishi T."/>
            <person name="Shibahara T."/>
            <person name="Tanaka T."/>
            <person name="Ishii S."/>
            <person name="Yamamoto J."/>
            <person name="Saito K."/>
            <person name="Kawai Y."/>
            <person name="Isono Y."/>
            <person name="Nakamura Y."/>
            <person name="Nagahari K."/>
            <person name="Murakami K."/>
            <person name="Yasuda T."/>
            <person name="Iwayanagi T."/>
            <person name="Wagatsuma M."/>
            <person name="Shiratori A."/>
            <person name="Sudo H."/>
            <person name="Hosoiri T."/>
            <person name="Kaku Y."/>
            <person name="Kodaira H."/>
            <person name="Kondo H."/>
            <person name="Sugawara M."/>
            <person name="Takahashi M."/>
            <person name="Kanda K."/>
            <person name="Yokoi T."/>
            <person name="Furuya T."/>
            <person name="Kikkawa E."/>
            <person name="Omura Y."/>
            <person name="Abe K."/>
            <person name="Kamihara K."/>
            <person name="Katsuta N."/>
            <person name="Sato K."/>
            <person name="Tanikawa M."/>
            <person name="Yamazaki M."/>
            <person name="Ninomiya K."/>
            <person name="Ishibashi T."/>
            <person name="Yamashita H."/>
            <person name="Murakawa K."/>
            <person name="Fujimori K."/>
            <person name="Tanai H."/>
            <person name="Kimata M."/>
            <person name="Watanabe M."/>
            <person name="Hiraoka S."/>
            <person name="Chiba Y."/>
            <person name="Ishida S."/>
            <person name="Ono Y."/>
            <person name="Takiguchi S."/>
            <person name="Watanabe S."/>
            <person name="Yosida M."/>
            <person name="Hotuta T."/>
            <person name="Kusano J."/>
            <person name="Kanehori K."/>
            <person name="Takahashi-Fujii A."/>
            <person name="Hara H."/>
            <person name="Tanase T.-O."/>
            <person name="Nomura Y."/>
            <person name="Togiya S."/>
            <person name="Komai F."/>
            <person name="Hara R."/>
            <person name="Takeuchi K."/>
            <person name="Arita M."/>
            <person name="Imose N."/>
            <person name="Musashino K."/>
            <person name="Yuuki H."/>
            <person name="Oshima A."/>
            <person name="Sasaki N."/>
            <person name="Aotsuka S."/>
            <person name="Yoshikawa Y."/>
            <person name="Matsunawa H."/>
            <person name="Ichihara T."/>
            <person name="Shiohata N."/>
            <person name="Sano S."/>
            <person name="Moriya S."/>
            <person name="Momiyama H."/>
            <person name="Satoh N."/>
            <person name="Takami S."/>
            <person name="Terashima Y."/>
            <person name="Suzuki O."/>
            <person name="Nakagawa S."/>
            <person name="Senoh A."/>
            <person name="Mizoguchi H."/>
            <person name="Goto Y."/>
            <person name="Shimizu F."/>
            <person name="Wakebe H."/>
            <person name="Hishigaki H."/>
            <person name="Watanabe T."/>
            <person name="Sugiyama A."/>
            <person name="Takemoto M."/>
            <person name="Kawakami B."/>
            <person name="Yamazaki M."/>
            <person name="Watanabe K."/>
            <person name="Kumagai A."/>
            <person name="Itakura S."/>
            <person name="Fukuzumi Y."/>
            <person name="Fujimori Y."/>
            <person name="Komiyama M."/>
            <person name="Tashiro H."/>
            <person name="Tanigami A."/>
            <person name="Fujiwara T."/>
            <person name="Ono T."/>
            <person name="Yamada K."/>
            <person name="Fujii Y."/>
            <person name="Ozaki K."/>
            <person name="Hirao M."/>
            <person name="Ohmori Y."/>
            <person name="Kawabata A."/>
            <person name="Hikiji T."/>
            <person name="Kobatake N."/>
            <person name="Inagaki H."/>
            <person name="Ikema Y."/>
            <person name="Okamoto S."/>
            <person name="Okitani R."/>
            <person name="Kawakami T."/>
            <person name="Noguchi S."/>
            <person name="Itoh T."/>
            <person name="Shigeta K."/>
            <person name="Senba T."/>
            <person name="Matsumura K."/>
            <person name="Nakajima Y."/>
            <person name="Mizuno T."/>
            <person name="Morinaga M."/>
            <person name="Sasaki M."/>
            <person name="Togashi T."/>
            <person name="Oyama M."/>
            <person name="Hata H."/>
            <person name="Watanabe M."/>
            <person name="Komatsu T."/>
            <person name="Mizushima-Sugano J."/>
            <person name="Satoh T."/>
            <person name="Shirai Y."/>
            <person name="Takahashi Y."/>
            <person name="Nakagawa K."/>
            <person name="Okumura K."/>
            <person name="Nagase T."/>
            <person name="Nomura N."/>
            <person name="Kikuchi H."/>
            <person name="Masuho Y."/>
            <person name="Yamashita R."/>
            <person name="Nakai K."/>
            <person name="Yada T."/>
            <person name="Nakamura Y."/>
            <person name="Ohara O."/>
            <person name="Isogai T."/>
            <person name="Sugano S."/>
        </authorList>
    </citation>
    <scope>NUCLEOTIDE SEQUENCE [LARGE SCALE MRNA] (ISOFORMS 1; 2; 3 AND 4)</scope>
    <source>
        <tissue>Hippocampus</tissue>
        <tissue>Testis</tissue>
        <tissue>Tongue</tissue>
        <tissue>Uterus</tissue>
    </source>
</reference>
<reference key="11">
    <citation type="journal article" date="2003" name="Nature">
        <title>The DNA sequence and analysis of human chromosome 6.</title>
        <authorList>
            <person name="Mungall A.J."/>
            <person name="Palmer S.A."/>
            <person name="Sims S.K."/>
            <person name="Edwards C.A."/>
            <person name="Ashurst J.L."/>
            <person name="Wilming L."/>
            <person name="Jones M.C."/>
            <person name="Horton R."/>
            <person name="Hunt S.E."/>
            <person name="Scott C.E."/>
            <person name="Gilbert J.G.R."/>
            <person name="Clamp M.E."/>
            <person name="Bethel G."/>
            <person name="Milne S."/>
            <person name="Ainscough R."/>
            <person name="Almeida J.P."/>
            <person name="Ambrose K.D."/>
            <person name="Andrews T.D."/>
            <person name="Ashwell R.I.S."/>
            <person name="Babbage A.K."/>
            <person name="Bagguley C.L."/>
            <person name="Bailey J."/>
            <person name="Banerjee R."/>
            <person name="Barker D.J."/>
            <person name="Barlow K.F."/>
            <person name="Bates K."/>
            <person name="Beare D.M."/>
            <person name="Beasley H."/>
            <person name="Beasley O."/>
            <person name="Bird C.P."/>
            <person name="Blakey S.E."/>
            <person name="Bray-Allen S."/>
            <person name="Brook J."/>
            <person name="Brown A.J."/>
            <person name="Brown J.Y."/>
            <person name="Burford D.C."/>
            <person name="Burrill W."/>
            <person name="Burton J."/>
            <person name="Carder C."/>
            <person name="Carter N.P."/>
            <person name="Chapman J.C."/>
            <person name="Clark S.Y."/>
            <person name="Clark G."/>
            <person name="Clee C.M."/>
            <person name="Clegg S."/>
            <person name="Cobley V."/>
            <person name="Collier R.E."/>
            <person name="Collins J.E."/>
            <person name="Colman L.K."/>
            <person name="Corby N.R."/>
            <person name="Coville G.J."/>
            <person name="Culley K.M."/>
            <person name="Dhami P."/>
            <person name="Davies J."/>
            <person name="Dunn M."/>
            <person name="Earthrowl M.E."/>
            <person name="Ellington A.E."/>
            <person name="Evans K.A."/>
            <person name="Faulkner L."/>
            <person name="Francis M.D."/>
            <person name="Frankish A."/>
            <person name="Frankland J."/>
            <person name="French L."/>
            <person name="Garner P."/>
            <person name="Garnett J."/>
            <person name="Ghori M.J."/>
            <person name="Gilby L.M."/>
            <person name="Gillson C.J."/>
            <person name="Glithero R.J."/>
            <person name="Grafham D.V."/>
            <person name="Grant M."/>
            <person name="Gribble S."/>
            <person name="Griffiths C."/>
            <person name="Griffiths M.N.D."/>
            <person name="Hall R."/>
            <person name="Halls K.S."/>
            <person name="Hammond S."/>
            <person name="Harley J.L."/>
            <person name="Hart E.A."/>
            <person name="Heath P.D."/>
            <person name="Heathcott R."/>
            <person name="Holmes S.J."/>
            <person name="Howden P.J."/>
            <person name="Howe K.L."/>
            <person name="Howell G.R."/>
            <person name="Huckle E."/>
            <person name="Humphray S.J."/>
            <person name="Humphries M.D."/>
            <person name="Hunt A.R."/>
            <person name="Johnson C.M."/>
            <person name="Joy A.A."/>
            <person name="Kay M."/>
            <person name="Keenan S.J."/>
            <person name="Kimberley A.M."/>
            <person name="King A."/>
            <person name="Laird G.K."/>
            <person name="Langford C."/>
            <person name="Lawlor S."/>
            <person name="Leongamornlert D.A."/>
            <person name="Leversha M."/>
            <person name="Lloyd C.R."/>
            <person name="Lloyd D.M."/>
            <person name="Loveland J.E."/>
            <person name="Lovell J."/>
            <person name="Martin S."/>
            <person name="Mashreghi-Mohammadi M."/>
            <person name="Maslen G.L."/>
            <person name="Matthews L."/>
            <person name="McCann O.T."/>
            <person name="McLaren S.J."/>
            <person name="McLay K."/>
            <person name="McMurray A."/>
            <person name="Moore M.J.F."/>
            <person name="Mullikin J.C."/>
            <person name="Niblett D."/>
            <person name="Nickerson T."/>
            <person name="Novik K.L."/>
            <person name="Oliver K."/>
            <person name="Overton-Larty E.K."/>
            <person name="Parker A."/>
            <person name="Patel R."/>
            <person name="Pearce A.V."/>
            <person name="Peck A.I."/>
            <person name="Phillimore B.J.C.T."/>
            <person name="Phillips S."/>
            <person name="Plumb R.W."/>
            <person name="Porter K.M."/>
            <person name="Ramsey Y."/>
            <person name="Ranby S.A."/>
            <person name="Rice C.M."/>
            <person name="Ross M.T."/>
            <person name="Searle S.M."/>
            <person name="Sehra H.K."/>
            <person name="Sheridan E."/>
            <person name="Skuce C.D."/>
            <person name="Smith S."/>
            <person name="Smith M."/>
            <person name="Spraggon L."/>
            <person name="Squares S.L."/>
            <person name="Steward C.A."/>
            <person name="Sycamore N."/>
            <person name="Tamlyn-Hall G."/>
            <person name="Tester J."/>
            <person name="Theaker A.J."/>
            <person name="Thomas D.W."/>
            <person name="Thorpe A."/>
            <person name="Tracey A."/>
            <person name="Tromans A."/>
            <person name="Tubby B."/>
            <person name="Wall M."/>
            <person name="Wallis J.M."/>
            <person name="West A.P."/>
            <person name="White S.S."/>
            <person name="Whitehead S.L."/>
            <person name="Whittaker H."/>
            <person name="Wild A."/>
            <person name="Willey D.J."/>
            <person name="Wilmer T.E."/>
            <person name="Wood J.M."/>
            <person name="Wray P.W."/>
            <person name="Wyatt J.C."/>
            <person name="Young L."/>
            <person name="Younger R.M."/>
            <person name="Bentley D.R."/>
            <person name="Coulson A."/>
            <person name="Durbin R.M."/>
            <person name="Hubbard T."/>
            <person name="Sulston J.E."/>
            <person name="Dunham I."/>
            <person name="Rogers J."/>
            <person name="Beck S."/>
        </authorList>
    </citation>
    <scope>NUCLEOTIDE SEQUENCE [LARGE SCALE GENOMIC DNA]</scope>
</reference>
<reference key="12">
    <citation type="submission" date="2005-09" db="EMBL/GenBank/DDBJ databases">
        <authorList>
            <person name="Mural R.J."/>
            <person name="Istrail S."/>
            <person name="Sutton G.G."/>
            <person name="Florea L."/>
            <person name="Halpern A.L."/>
            <person name="Mobarry C.M."/>
            <person name="Lippert R."/>
            <person name="Walenz B."/>
            <person name="Shatkay H."/>
            <person name="Dew I."/>
            <person name="Miller J.R."/>
            <person name="Flanigan M.J."/>
            <person name="Edwards N.J."/>
            <person name="Bolanos R."/>
            <person name="Fasulo D."/>
            <person name="Halldorsson B.V."/>
            <person name="Hannenhalli S."/>
            <person name="Turner R."/>
            <person name="Yooseph S."/>
            <person name="Lu F."/>
            <person name="Nusskern D.R."/>
            <person name="Shue B.C."/>
            <person name="Zheng X.H."/>
            <person name="Zhong F."/>
            <person name="Delcher A.L."/>
            <person name="Huson D.H."/>
            <person name="Kravitz S.A."/>
            <person name="Mouchard L."/>
            <person name="Reinert K."/>
            <person name="Remington K.A."/>
            <person name="Clark A.G."/>
            <person name="Waterman M.S."/>
            <person name="Eichler E.E."/>
            <person name="Adams M.D."/>
            <person name="Hunkapiller M.W."/>
            <person name="Myers E.W."/>
            <person name="Venter J.C."/>
        </authorList>
    </citation>
    <scope>NUCLEOTIDE SEQUENCE [LARGE SCALE GENOMIC DNA]</scope>
</reference>
<reference key="13">
    <citation type="journal article" date="2004" name="Genome Res.">
        <title>The status, quality, and expansion of the NIH full-length cDNA project: the Mammalian Gene Collection (MGC).</title>
        <authorList>
            <consortium name="The MGC Project Team"/>
        </authorList>
    </citation>
    <scope>NUCLEOTIDE SEQUENCE [LARGE SCALE MRNA] (ISOFORM 1)</scope>
    <source>
        <tissue>Lung</tissue>
    </source>
</reference>
<reference key="14">
    <citation type="journal article" date="1984" name="J. Biol. Chem.">
        <title>The primary structure of human liver manganese superoxide dismutase.</title>
        <authorList>
            <person name="Barra D."/>
            <person name="Schinina M.E."/>
            <person name="Simmaco M."/>
            <person name="Bannister J.V."/>
            <person name="Bannister W.H."/>
            <person name="Rotilio G."/>
            <person name="Bossa F."/>
        </authorList>
    </citation>
    <scope>PROTEIN SEQUENCE OF 25-222</scope>
</reference>
<reference key="15">
    <citation type="journal article" date="1994" name="Electrophoresis">
        <title>The human myocardial two-dimensional gel protein database: update 1994.</title>
        <authorList>
            <person name="Corbett J.M."/>
            <person name="Wheeler C.H."/>
            <person name="Baker C.S."/>
            <person name="Yacoub M.H."/>
            <person name="Dunn M.J."/>
        </authorList>
    </citation>
    <scope>PROTEIN SEQUENCE OF 25-39</scope>
    <source>
        <tissue>Heart</tissue>
    </source>
</reference>
<reference key="16">
    <citation type="journal article" date="1995" name="Electrophoresis">
        <title>The major protein expression profile and two-dimensional protein database of human heart.</title>
        <authorList>
            <person name="Kovalyov L.I."/>
            <person name="Shishkin S.S."/>
            <person name="Efimochkin A.S."/>
            <person name="Kovalyova M.A."/>
            <person name="Ershova E.S."/>
            <person name="Egorov T.A."/>
            <person name="Musalyamov A.K."/>
        </authorList>
    </citation>
    <scope>PROTEIN SEQUENCE OF 25-39</scope>
    <source>
        <tissue>Heart</tissue>
    </source>
</reference>
<reference key="17">
    <citation type="journal article" date="1997" name="Electrophoresis">
        <title>Two-dimensional electrophoretic analysis of human breast carcinoma proteins: mapping of proteins that bind to the SH3 domain of mixed lineage kinase MLK2.</title>
        <authorList>
            <person name="Rasmussen R.K."/>
            <person name="Ji H."/>
            <person name="Eddes J.S."/>
            <person name="Moritz R.L."/>
            <person name="Reid G.E."/>
            <person name="Simpson R.J."/>
            <person name="Dorow D.S."/>
        </authorList>
    </citation>
    <scope>PROTEIN SEQUENCE OF 25-39</scope>
    <source>
        <tissue>Mammary carcinoma</tissue>
    </source>
</reference>
<reference key="18">
    <citation type="journal article" date="1999" name="Arch. Biochem. Biophys.">
        <title>Tyrosine modifications and inactivation of active site manganese superoxide dismutase mutant (Y34F) by peroxynitrite.</title>
        <authorList>
            <person name="MacMillan-Crow L.A."/>
            <person name="Thompson J.A."/>
        </authorList>
    </citation>
    <scope>FUNCTION</scope>
    <scope>CATALYTIC ACTIVITY</scope>
    <scope>NITRATION AT TYR-58</scope>
    <scope>MUTAGENESIS OF TYR-58</scope>
</reference>
<reference key="19">
    <citation type="journal article" date="2006" name="Am. J. Physiol.">
        <title>Detection of sequence-specific tyrosine nitration of manganese SOD and SERCA in cardiovascular disease and aging.</title>
        <authorList>
            <person name="Xu S."/>
            <person name="Ying J."/>
            <person name="Jiang B."/>
            <person name="Guo W."/>
            <person name="Adachi T."/>
            <person name="Sharov V."/>
            <person name="Lazar H."/>
            <person name="Menzoian J."/>
            <person name="Knyushko T.V."/>
            <person name="Bigelow D."/>
            <person name="Schoeneich C."/>
            <person name="Cohen R.A."/>
        </authorList>
    </citation>
    <scope>NITRATION AT TYR-58</scope>
</reference>
<reference key="20">
    <citation type="journal article" date="2009" name="Science">
        <title>Lysine acetylation targets protein complexes and co-regulates major cellular functions.</title>
        <authorList>
            <person name="Choudhary C."/>
            <person name="Kumar C."/>
            <person name="Gnad F."/>
            <person name="Nielsen M.L."/>
            <person name="Rehman M."/>
            <person name="Walther T.C."/>
            <person name="Olsen J.V."/>
            <person name="Mann M."/>
        </authorList>
    </citation>
    <scope>ACETYLATION [LARGE SCALE ANALYSIS] AT LYS-68 AND LYS-130</scope>
    <scope>IDENTIFICATION BY MASS SPECTROMETRY [LARGE SCALE ANALYSIS]</scope>
</reference>
<reference key="21">
    <citation type="journal article" date="2010" name="PLoS ONE">
        <title>KRIT1 regulates the homeostasis of intracellular reactive oxygen species.</title>
        <authorList>
            <person name="Goitre L."/>
            <person name="Balzac F."/>
            <person name="Degani S."/>
            <person name="Degan P."/>
            <person name="Marchi S."/>
            <person name="Pinton P."/>
            <person name="Retta S.F."/>
        </authorList>
    </citation>
    <scope>INDUCTION</scope>
</reference>
<reference key="22">
    <citation type="journal article" date="2011" name="BMC Syst. Biol.">
        <title>Initial characterization of the human central proteome.</title>
        <authorList>
            <person name="Burkard T.R."/>
            <person name="Planyavsky M."/>
            <person name="Kaupe I."/>
            <person name="Breitwieser F.P."/>
            <person name="Buerckstuemmer T."/>
            <person name="Bennett K.L."/>
            <person name="Superti-Furga G."/>
            <person name="Colinge J."/>
        </authorList>
    </citation>
    <scope>IDENTIFICATION BY MASS SPECTROMETRY [LARGE SCALE ANALYSIS]</scope>
</reference>
<reference key="23">
    <citation type="journal article" date="2011" name="J. Cell. Biochem.">
        <title>Protein stability of mitochondrial superoxide dismutase SOD2 is regulated by USP36.</title>
        <authorList>
            <person name="Kim M.S."/>
            <person name="Ramakrishna S."/>
            <person name="Lim K.H."/>
            <person name="Kim J.H."/>
            <person name="Baek K.H."/>
        </authorList>
    </citation>
    <scope>UBIQUITINATION</scope>
    <scope>DEUBIQUITINATION BY USP36</scope>
</reference>
<reference key="24">
    <citation type="journal article" date="2014" name="J. Proteomics">
        <title>An enzyme assisted RP-RPLC approach for in-depth analysis of human liver phosphoproteome.</title>
        <authorList>
            <person name="Bian Y."/>
            <person name="Song C."/>
            <person name="Cheng K."/>
            <person name="Dong M."/>
            <person name="Wang F."/>
            <person name="Huang J."/>
            <person name="Sun D."/>
            <person name="Wang L."/>
            <person name="Ye M."/>
            <person name="Zou H."/>
        </authorList>
    </citation>
    <scope>IDENTIFICATION BY MASS SPECTROMETRY [LARGE SCALE ANALYSIS]</scope>
    <source>
        <tissue>Liver</tissue>
    </source>
</reference>
<reference key="25">
    <citation type="journal article" date="2015" name="Proteomics">
        <title>N-terminome analysis of the human mitochondrial proteome.</title>
        <authorList>
            <person name="Vaca Jacome A.S."/>
            <person name="Rabilloud T."/>
            <person name="Schaeffer-Reiss C."/>
            <person name="Rompais M."/>
            <person name="Ayoub D."/>
            <person name="Lane L."/>
            <person name="Bairoch A."/>
            <person name="Van Dorsselaer A."/>
            <person name="Carapito C."/>
        </authorList>
    </citation>
    <scope>IDENTIFICATION BY MASS SPECTROMETRY [LARGE SCALE ANALYSIS]</scope>
</reference>
<reference evidence="27" key="26">
    <citation type="journal article" date="1992" name="Cell">
        <title>The structure of human mitochondrial manganese superoxide dismutase reveals a novel tetrameric interface of two 4-helix bundles.</title>
        <authorList>
            <person name="Borgstahl G.E.O."/>
            <person name="Parge H.E."/>
            <person name="Hickey M.J."/>
            <person name="Beyer W.F. Jr."/>
            <person name="Hallewell R.A."/>
            <person name="Tainer J.A."/>
        </authorList>
    </citation>
    <scope>X-RAY CRYSTALLOGRAPHY (2.2 ANGSTROMS) OF 25-222 IN COMPLEX WITH MANGANESE</scope>
</reference>
<reference evidence="29" key="27">
    <citation type="journal article" date="1996" name="Biochemistry">
        <title>Human mitochondrial manganese superoxide dismutase polymorphic variant Ile58Thr reduces activity by destabilizing the tetrameric interface.</title>
        <authorList>
            <person name="Borgstahl G.E.O."/>
            <person name="Parge H.E."/>
            <person name="Hickey M.J."/>
            <person name="Johnson M.J."/>
            <person name="Boissinot M."/>
            <person name="Hallewell R.A."/>
            <person name="Lepock J.R."/>
            <person name="Cabelli D.E."/>
            <person name="Tainer J.A."/>
        </authorList>
    </citation>
    <scope>X-RAY CRYSTALLOGRAPHY (2.5 ANGSTROMS)OF 25-222 AND OF VARIANT THR-82</scope>
    <scope>CATALYTIC ACTIVITY</scope>
</reference>
<reference evidence="28" key="28">
    <citation type="journal article" date="1998" name="Biochemistry">
        <title>Probing the active site of human manganese superoxide dismutase: the role of glutamine 143.</title>
        <authorList>
            <person name="Hsieh Y."/>
            <person name="Guan Y."/>
            <person name="Tu C."/>
            <person name="Bratt P.J."/>
            <person name="Angerhofer A."/>
            <person name="Lepock J.R."/>
            <person name="Hickey M.J."/>
            <person name="Tainer J.A."/>
            <person name="Nick H.S."/>
            <person name="Silverman D.N."/>
        </authorList>
    </citation>
    <scope>X-RAY CRYSTALLOGRAPHY (2.3 ANGSTROMS) OF 25-222 AND OF MUTANT ASN-167 IN COMPLEX WITH MANGANESE</scope>
    <scope>CATALYTIC ACTIVITY</scope>
</reference>
<reference evidence="23 24" key="29">
    <citation type="journal article" date="1998" name="Biochemistry">
        <title>Crystal structure of Y34F mutant human mitochondrial manganese superoxide dismutase and the functional role of tyrosine 34.</title>
        <authorList>
            <person name="Guan Y."/>
            <person name="Hickey M.J."/>
            <person name="Borgstahl G.E.O."/>
            <person name="Hallewell R.A."/>
            <person name="Lepock J.R."/>
            <person name="O'Connor D."/>
            <person name="Hsieh Y."/>
            <person name="Nick H.S."/>
            <person name="Silverman D.N."/>
            <person name="Tainer J.A."/>
        </authorList>
    </citation>
    <scope>X-RAY CRYSTALLOGRAPHY (2.2 ANGSTROMS) OF 25-222 AND OF MUTANT TYR-58 IN COMPLEX WITH MANGANESE</scope>
    <scope>CATALYTIC ACTIVITY</scope>
</reference>
<reference evidence="25" key="30">
    <citation type="journal article" date="2000" name="Biochemistry">
        <title>Multiple replacements of glutamine 143 in human manganese superoxide dismutase: effects on structure, stability, and catalysis.</title>
        <authorList>
            <person name="Leveque V.J.-P."/>
            <person name="Stroupe M.E."/>
            <person name="Lepock J.R."/>
            <person name="Cabelli D.E."/>
            <person name="Tainer J.A."/>
            <person name="Nick H.S."/>
            <person name="Silverman D.N."/>
        </authorList>
    </citation>
    <scope>X-RAY CRYSTALLOGRAPHY (2.13 ANGSTROMS) OF 25-222 AND OF MUTANT ALA-167 IN COMPLEX WITH MANGANESE</scope>
    <scope>CATALYTIC ACTIVITY</scope>
</reference>
<reference evidence="26" key="31">
    <citation type="journal article" date="2001" name="Biochemistry">
        <title>Kinetic analysis of product inhibition in human manganese superoxide dismutase.</title>
        <authorList>
            <person name="Hearn A.S."/>
            <person name="Stroupe M.E."/>
            <person name="Cabelli D.E."/>
            <person name="Lepock J.R."/>
            <person name="Tainer J.A."/>
            <person name="Nick H.S."/>
            <person name="Silverman D.N."/>
        </authorList>
    </citation>
    <scope>X-RAY CRYSTALLOGRAPHY (2.12 ANGSTROMS) OF 25-222 AND MUTANT ALA-185 IN COMPLEX WITH MANGANESE</scope>
    <scope>CATALYTIC ACTIVITY</scope>
</reference>
<reference evidence="30 31 32 33" key="32">
    <citation type="journal article" date="2009" name="Biochemistry">
        <title>Contribution of human manganese superoxide dismutase tyrosine 34 to structure and catalysis.</title>
        <authorList>
            <person name="Perry J.J."/>
            <person name="Hearn A.S."/>
            <person name="Cabelli D.E."/>
            <person name="Nick H.S."/>
            <person name="Tainer J.A."/>
            <person name="Silverman D.N."/>
        </authorList>
    </citation>
    <scope>X-RAY CRYSTALLOGRAPHY (1.48 ANGSTROMS) OF 25-222 AND OF MUTANTS ALA/ASN/HIS/VAL-58 IN COMPLEX WITH MANGANESE</scope>
    <scope>CATALYTIC ACTIVITY</scope>
    <scope>SUBUNIT</scope>
</reference>
<reference key="33">
    <citation type="journal article" date="2003" name="J. Hum. Genet.">
        <title>The polymorphism of manganese superoxide dismutase is associated with diabetic nephropathy in Japanese type 2 diabetic patients.</title>
        <authorList>
            <person name="Nomiyama T."/>
            <person name="Tanaka Y."/>
            <person name="Piao L."/>
            <person name="Nagasaka K."/>
            <person name="Sakai K."/>
            <person name="Ogihara T."/>
            <person name="Nakajima K."/>
            <person name="Watada H."/>
            <person name="Kawamori R."/>
        </authorList>
    </citation>
    <scope>VARIANT ALA-16</scope>
    <scope>INVOLVEMENT IN SUSCEPTIBILITY TO MVCD6</scope>
</reference>
<reference key="34">
    <citation type="journal article" date="2009" name="Mol. Cell. Biochem.">
        <title>The manganese superoxide dismutase Val16Ala polymorphism is associated with decreased risk of diabetic nephropathy in Chinese patients with type 2 diabetes.</title>
        <authorList>
            <person name="Liu L."/>
            <person name="Zheng T."/>
            <person name="Wang N."/>
            <person name="Wang F."/>
            <person name="Li M."/>
            <person name="Jiang J."/>
            <person name="Zhao R."/>
            <person name="Li L."/>
            <person name="Zhao W."/>
            <person name="Zhu Q."/>
            <person name="Jia W."/>
        </authorList>
    </citation>
    <scope>VARIANT ALA-16</scope>
    <scope>INVOLVEMENT IN SUSCEPTIBILITY TO MVCD6</scope>
</reference>
<protein>
    <recommendedName>
        <fullName>Superoxide dismutase [Mn], mitochondrial</fullName>
        <ecNumber evidence="2 3 4 9 15 17 18">1.15.1.1</ecNumber>
    </recommendedName>
</protein>
<sequence>MLSRAVCGTSRQLAPVLGYLGSRQKHSLPDLPYDYGALEPHINAQIMQLHHSKHHAAYVNNLNVTEEKYQEALAKGDVTAQIALQPALKFNGGGHINHSIFWTNLSPNGGGEPKGELLEAIKRDFGSFDKFKEKLTAASVGVQGSGWGWLGFNKERGHLQIAACPNQDPLQGTTGLIPLLGIDVWEHAYYLQYKNVRPDYLKAIWNVINWENVTERYMACKK</sequence>
<dbReference type="EC" id="1.15.1.1" evidence="2 3 4 9 15 17 18"/>
<dbReference type="EMBL" id="X59445">
    <property type="protein sequence ID" value="CAA42066.1"/>
    <property type="molecule type" value="mRNA"/>
</dbReference>
<dbReference type="EMBL" id="Y00472">
    <property type="protein sequence ID" value="CAA68533.1"/>
    <property type="molecule type" value="mRNA"/>
</dbReference>
<dbReference type="EMBL" id="Y00985">
    <property type="protein sequence ID" value="CAA68791.1"/>
    <property type="molecule type" value="mRNA"/>
</dbReference>
<dbReference type="EMBL" id="X07834">
    <property type="protein sequence ID" value="CAA30687.1"/>
    <property type="molecule type" value="mRNA"/>
</dbReference>
<dbReference type="EMBL" id="M36693">
    <property type="protein sequence ID" value="AAA36622.1"/>
    <property type="molecule type" value="mRNA"/>
</dbReference>
<dbReference type="EMBL" id="X15132">
    <property type="protein sequence ID" value="CAA33228.1"/>
    <property type="molecule type" value="mRNA"/>
</dbReference>
<dbReference type="EMBL" id="X14322">
    <property type="protein sequence ID" value="CAA32502.1"/>
    <property type="molecule type" value="mRNA"/>
</dbReference>
<dbReference type="EMBL" id="S77127">
    <property type="protein sequence ID" value="AAD14248.1"/>
    <property type="status" value="ALT_SEQ"/>
    <property type="molecule type" value="Genomic_DNA"/>
</dbReference>
<dbReference type="EMBL" id="BT006967">
    <property type="protein sequence ID" value="AAP35613.1"/>
    <property type="molecule type" value="mRNA"/>
</dbReference>
<dbReference type="EMBL" id="AY267901">
    <property type="protein sequence ID" value="AAP03428.1"/>
    <property type="molecule type" value="Genomic_DNA"/>
</dbReference>
<dbReference type="EMBL" id="AK097395">
    <property type="protein sequence ID" value="BAG53464.1"/>
    <property type="molecule type" value="mRNA"/>
</dbReference>
<dbReference type="EMBL" id="AK296809">
    <property type="protein sequence ID" value="BAG59382.1"/>
    <property type="molecule type" value="mRNA"/>
</dbReference>
<dbReference type="EMBL" id="AK304766">
    <property type="protein sequence ID" value="BAG65521.1"/>
    <property type="molecule type" value="mRNA"/>
</dbReference>
<dbReference type="EMBL" id="AK313082">
    <property type="protein sequence ID" value="BAG35908.1"/>
    <property type="molecule type" value="mRNA"/>
</dbReference>
<dbReference type="EMBL" id="AL135914">
    <property type="status" value="NOT_ANNOTATED_CDS"/>
    <property type="molecule type" value="Genomic_DNA"/>
</dbReference>
<dbReference type="EMBL" id="CH471051">
    <property type="protein sequence ID" value="EAW47630.1"/>
    <property type="molecule type" value="Genomic_DNA"/>
</dbReference>
<dbReference type="EMBL" id="CH471051">
    <property type="protein sequence ID" value="EAW47631.1"/>
    <property type="molecule type" value="Genomic_DNA"/>
</dbReference>
<dbReference type="EMBL" id="BC012423">
    <property type="protein sequence ID" value="AAH12423.1"/>
    <property type="molecule type" value="mRNA"/>
</dbReference>
<dbReference type="CCDS" id="CCDS34564.1">
    <molecule id="P04179-2"/>
</dbReference>
<dbReference type="CCDS" id="CCDS5265.1">
    <molecule id="P04179-1"/>
</dbReference>
<dbReference type="CCDS" id="CCDS83141.1">
    <molecule id="P04179-4"/>
</dbReference>
<dbReference type="CCDS" id="CCDS83143.1">
    <molecule id="P04179-3"/>
</dbReference>
<dbReference type="PIR" id="S13162">
    <property type="entry name" value="DSHUN"/>
</dbReference>
<dbReference type="RefSeq" id="NP_000627.2">
    <molecule id="P04179-1"/>
    <property type="nucleotide sequence ID" value="NM_000636.4"/>
</dbReference>
<dbReference type="RefSeq" id="NP_001019636.1">
    <molecule id="P04179-1"/>
    <property type="nucleotide sequence ID" value="NM_001024465.3"/>
</dbReference>
<dbReference type="RefSeq" id="NP_001019637.1">
    <molecule id="P04179-2"/>
    <property type="nucleotide sequence ID" value="NM_001024466.3"/>
</dbReference>
<dbReference type="RefSeq" id="NP_001309743.1">
    <molecule id="P04179-2"/>
    <property type="nucleotide sequence ID" value="NM_001322814.2"/>
</dbReference>
<dbReference type="RefSeq" id="NP_001309744.1">
    <molecule id="P04179-3"/>
    <property type="nucleotide sequence ID" value="NM_001322815.2"/>
</dbReference>
<dbReference type="RefSeq" id="NP_001309746.1">
    <molecule id="P04179-4"/>
    <property type="nucleotide sequence ID" value="NM_001322817.2"/>
</dbReference>
<dbReference type="RefSeq" id="NP_001309748.1">
    <molecule id="P04179-4"/>
    <property type="nucleotide sequence ID" value="NM_001322819.2"/>
</dbReference>
<dbReference type="RefSeq" id="NP_001309749.1">
    <molecule id="P04179-4"/>
    <property type="nucleotide sequence ID" value="NM_001322820.2"/>
</dbReference>
<dbReference type="PDB" id="1AP5">
    <property type="method" value="X-ray"/>
    <property type="resolution" value="2.20 A"/>
    <property type="chains" value="A/B=25-222"/>
</dbReference>
<dbReference type="PDB" id="1AP6">
    <property type="method" value="X-ray"/>
    <property type="resolution" value="1.90 A"/>
    <property type="chains" value="A/B=25-222"/>
</dbReference>
<dbReference type="PDB" id="1EM1">
    <property type="method" value="X-ray"/>
    <property type="resolution" value="2.13 A"/>
    <property type="chains" value="A/B=25-222"/>
</dbReference>
<dbReference type="PDB" id="1JA8">
    <property type="method" value="X-ray"/>
    <property type="resolution" value="2.12 A"/>
    <property type="chains" value="A/B=25-222"/>
</dbReference>
<dbReference type="PDB" id="1LUV">
    <property type="method" value="X-ray"/>
    <property type="resolution" value="1.85 A"/>
    <property type="chains" value="A/B=25-222"/>
</dbReference>
<dbReference type="PDB" id="1LUW">
    <property type="method" value="X-ray"/>
    <property type="resolution" value="2.30 A"/>
    <property type="chains" value="A/B=25-222"/>
</dbReference>
<dbReference type="PDB" id="1MSD">
    <property type="method" value="X-ray"/>
    <property type="resolution" value="3.20 A"/>
    <property type="chains" value="A/B=25-222"/>
</dbReference>
<dbReference type="PDB" id="1N0J">
    <property type="method" value="X-ray"/>
    <property type="resolution" value="2.20 A"/>
    <property type="chains" value="A/B=25-222"/>
</dbReference>
<dbReference type="PDB" id="1N0N">
    <property type="method" value="X-ray"/>
    <property type="resolution" value="1.82 A"/>
    <property type="chains" value="A/B=25-222"/>
</dbReference>
<dbReference type="PDB" id="1PL4">
    <property type="method" value="X-ray"/>
    <property type="resolution" value="1.47 A"/>
    <property type="chains" value="A/B/C/D=25-222"/>
</dbReference>
<dbReference type="PDB" id="1PM9">
    <property type="method" value="X-ray"/>
    <property type="resolution" value="1.70 A"/>
    <property type="chains" value="A/B=25-222"/>
</dbReference>
<dbReference type="PDB" id="1QNM">
    <property type="method" value="X-ray"/>
    <property type="resolution" value="2.30 A"/>
    <property type="chains" value="A/B=25-222"/>
</dbReference>
<dbReference type="PDB" id="1SZX">
    <property type="method" value="X-ray"/>
    <property type="resolution" value="1.95 A"/>
    <property type="chains" value="A/B=25-222"/>
</dbReference>
<dbReference type="PDB" id="1VAR">
    <property type="method" value="X-ray"/>
    <property type="resolution" value="2.50 A"/>
    <property type="chains" value="A/B=25-222"/>
</dbReference>
<dbReference type="PDB" id="1XDC">
    <property type="method" value="X-ray"/>
    <property type="resolution" value="1.85 A"/>
    <property type="chains" value="A/B=25-222"/>
</dbReference>
<dbReference type="PDB" id="1XIL">
    <property type="method" value="X-ray"/>
    <property type="resolution" value="1.53 A"/>
    <property type="chains" value="A/B=25-222"/>
</dbReference>
<dbReference type="PDB" id="1ZSP">
    <property type="method" value="X-ray"/>
    <property type="resolution" value="1.90 A"/>
    <property type="chains" value="A/B=25-222"/>
</dbReference>
<dbReference type="PDB" id="1ZTE">
    <property type="method" value="X-ray"/>
    <property type="resolution" value="1.85 A"/>
    <property type="chains" value="A/B/C/D=25-222"/>
</dbReference>
<dbReference type="PDB" id="1ZUQ">
    <property type="method" value="X-ray"/>
    <property type="resolution" value="2.00 A"/>
    <property type="chains" value="A/B=25-222"/>
</dbReference>
<dbReference type="PDB" id="2ADP">
    <property type="method" value="X-ray"/>
    <property type="resolution" value="2.40 A"/>
    <property type="chains" value="A=25-222"/>
</dbReference>
<dbReference type="PDB" id="2ADQ">
    <property type="method" value="X-ray"/>
    <property type="resolution" value="2.40 A"/>
    <property type="chains" value="B=25-222"/>
</dbReference>
<dbReference type="PDB" id="2GDS">
    <property type="method" value="X-ray"/>
    <property type="resolution" value="2.30 A"/>
    <property type="chains" value="A/B/C/D=25-222"/>
</dbReference>
<dbReference type="PDB" id="2P4K">
    <property type="method" value="X-ray"/>
    <property type="resolution" value="1.48 A"/>
    <property type="chains" value="A/B/C/D=25-222"/>
</dbReference>
<dbReference type="PDB" id="2QKA">
    <property type="method" value="X-ray"/>
    <property type="resolution" value="2.20 A"/>
    <property type="chains" value="A/C=25-220"/>
</dbReference>
<dbReference type="PDB" id="2QKC">
    <property type="method" value="X-ray"/>
    <property type="resolution" value="2.30 A"/>
    <property type="chains" value="A/C=25-220"/>
</dbReference>
<dbReference type="PDB" id="3C3S">
    <property type="method" value="X-ray"/>
    <property type="resolution" value="2.50 A"/>
    <property type="chains" value="A/B=25-222"/>
</dbReference>
<dbReference type="PDB" id="3C3T">
    <property type="method" value="X-ray"/>
    <property type="resolution" value="2.20 A"/>
    <property type="chains" value="A/B=25-222"/>
</dbReference>
<dbReference type="PDB" id="5GXO">
    <property type="method" value="X-ray"/>
    <property type="resolution" value="2.30 A"/>
    <property type="chains" value="A/B=25-222"/>
</dbReference>
<dbReference type="PDB" id="5T30">
    <property type="method" value="X-ray"/>
    <property type="resolution" value="1.77 A"/>
    <property type="chains" value="A/B=24-222"/>
</dbReference>
<dbReference type="PDB" id="5VF9">
    <property type="method" value="X-ray"/>
    <property type="resolution" value="1.82 A"/>
    <property type="chains" value="A/B=24-222"/>
</dbReference>
<dbReference type="PDB" id="7KKS">
    <property type="method" value="Neutron"/>
    <property type="resolution" value="2.20 A"/>
    <property type="chains" value="A/B=24-222"/>
</dbReference>
<dbReference type="PDB" id="7KKU">
    <property type="method" value="X-ray"/>
    <property type="resolution" value="2.02 A"/>
    <property type="chains" value="A/B=24-222"/>
</dbReference>
<dbReference type="PDB" id="7KKW">
    <property type="method" value="Neutron"/>
    <property type="resolution" value="2.30 A"/>
    <property type="chains" value="A/B=24-222"/>
</dbReference>
<dbReference type="PDB" id="7KLB">
    <property type="method" value="X-ray"/>
    <property type="resolution" value="2.16 A"/>
    <property type="chains" value="A/B=24-222"/>
</dbReference>
<dbReference type="PDB" id="8SKS">
    <property type="method" value="EM"/>
    <property type="resolution" value="2.91 A"/>
    <property type="chains" value="A/B/C/D=1-222"/>
</dbReference>
<dbReference type="PDB" id="8VHW">
    <property type="method" value="Neutron"/>
    <property type="resolution" value="2.30 A"/>
    <property type="chains" value="A/B=24-222"/>
</dbReference>
<dbReference type="PDB" id="8VHY">
    <property type="method" value="Neutron"/>
    <property type="resolution" value="2.30 A"/>
    <property type="chains" value="A/B=24-222"/>
</dbReference>
<dbReference type="PDB" id="8VJ0">
    <property type="method" value="Neutron"/>
    <property type="resolution" value="2.30 A"/>
    <property type="chains" value="A/B=24-222"/>
</dbReference>
<dbReference type="PDB" id="8VJ4">
    <property type="method" value="X-ray"/>
    <property type="resolution" value="1.68 A"/>
    <property type="chains" value="A/B=24-222"/>
</dbReference>
<dbReference type="PDB" id="8VJ5">
    <property type="method" value="X-ray"/>
    <property type="resolution" value="1.76 A"/>
    <property type="chains" value="A/B=24-222"/>
</dbReference>
<dbReference type="PDB" id="8VJ8">
    <property type="method" value="X-ray"/>
    <property type="resolution" value="1.70 A"/>
    <property type="chains" value="A/B=24-222"/>
</dbReference>
<dbReference type="PDB" id="9BVY">
    <property type="method" value="Neutron"/>
    <property type="resolution" value="2.30 A"/>
    <property type="chains" value="A/B=24-222"/>
</dbReference>
<dbReference type="PDB" id="9BW2">
    <property type="method" value="Neutron"/>
    <property type="resolution" value="2.50 A"/>
    <property type="chains" value="A/B=24-222"/>
</dbReference>
<dbReference type="PDB" id="9BWM">
    <property type="method" value="Neutron"/>
    <property type="resolution" value="2.28 A"/>
    <property type="chains" value="A/B=24-222"/>
</dbReference>
<dbReference type="PDB" id="9BWQ">
    <property type="method" value="X-ray"/>
    <property type="resolution" value="1.40 A"/>
    <property type="chains" value="A/B=24-222"/>
</dbReference>
<dbReference type="PDB" id="9BWR">
    <property type="method" value="X-ray"/>
    <property type="resolution" value="1.50 A"/>
    <property type="chains" value="A/B=24-222"/>
</dbReference>
<dbReference type="PDBsum" id="1AP5"/>
<dbReference type="PDBsum" id="1AP6"/>
<dbReference type="PDBsum" id="1EM1"/>
<dbReference type="PDBsum" id="1JA8"/>
<dbReference type="PDBsum" id="1LUV"/>
<dbReference type="PDBsum" id="1LUW"/>
<dbReference type="PDBsum" id="1MSD"/>
<dbReference type="PDBsum" id="1N0J"/>
<dbReference type="PDBsum" id="1N0N"/>
<dbReference type="PDBsum" id="1PL4"/>
<dbReference type="PDBsum" id="1PM9"/>
<dbReference type="PDBsum" id="1QNM"/>
<dbReference type="PDBsum" id="1SZX"/>
<dbReference type="PDBsum" id="1VAR"/>
<dbReference type="PDBsum" id="1XDC"/>
<dbReference type="PDBsum" id="1XIL"/>
<dbReference type="PDBsum" id="1ZSP"/>
<dbReference type="PDBsum" id="1ZTE"/>
<dbReference type="PDBsum" id="1ZUQ"/>
<dbReference type="PDBsum" id="2ADP"/>
<dbReference type="PDBsum" id="2ADQ"/>
<dbReference type="PDBsum" id="2GDS"/>
<dbReference type="PDBsum" id="2P4K"/>
<dbReference type="PDBsum" id="2QKA"/>
<dbReference type="PDBsum" id="2QKC"/>
<dbReference type="PDBsum" id="3C3S"/>
<dbReference type="PDBsum" id="3C3T"/>
<dbReference type="PDBsum" id="5GXO"/>
<dbReference type="PDBsum" id="5T30"/>
<dbReference type="PDBsum" id="5VF9"/>
<dbReference type="PDBsum" id="7KKS"/>
<dbReference type="PDBsum" id="7KKU"/>
<dbReference type="PDBsum" id="7KKW"/>
<dbReference type="PDBsum" id="7KLB"/>
<dbReference type="PDBsum" id="8SKS"/>
<dbReference type="PDBsum" id="8VHW"/>
<dbReference type="PDBsum" id="8VHY"/>
<dbReference type="PDBsum" id="8VJ0"/>
<dbReference type="PDBsum" id="8VJ4"/>
<dbReference type="PDBsum" id="8VJ5"/>
<dbReference type="PDBsum" id="8VJ8"/>
<dbReference type="PDBsum" id="9BVY"/>
<dbReference type="PDBsum" id="9BW2"/>
<dbReference type="PDBsum" id="9BWM"/>
<dbReference type="PDBsum" id="9BWQ"/>
<dbReference type="PDBsum" id="9BWR"/>
<dbReference type="EMDB" id="EMD-40566"/>
<dbReference type="SMR" id="P04179"/>
<dbReference type="BioGRID" id="112531">
    <property type="interactions" value="98"/>
</dbReference>
<dbReference type="FunCoup" id="P04179">
    <property type="interactions" value="1260"/>
</dbReference>
<dbReference type="IntAct" id="P04179">
    <property type="interactions" value="29"/>
</dbReference>
<dbReference type="MINT" id="P04179"/>
<dbReference type="STRING" id="9606.ENSP00000446252"/>
<dbReference type="ChEMBL" id="CHEMBL4105776"/>
<dbReference type="DrugBank" id="DB04436">
    <property type="generic name" value="3-Fluoro-L-tyrosine"/>
</dbReference>
<dbReference type="DrugBank" id="DB09096">
    <property type="generic name" value="Benzoyl peroxide"/>
</dbReference>
<dbReference type="DrugBank" id="DB03297">
    <property type="generic name" value="Benzylsulfonic acid"/>
</dbReference>
<dbReference type="DrugBank" id="DB06796">
    <property type="generic name" value="Mangafodipir"/>
</dbReference>
<dbReference type="DrugBank" id="DB06757">
    <property type="generic name" value="Manganese cation"/>
</dbReference>
<dbReference type="DrugBank" id="DB09221">
    <property type="generic name" value="Polaprezinc"/>
</dbReference>
<dbReference type="DrugBank" id="DB11590">
    <property type="generic name" value="Thimerosal"/>
</dbReference>
<dbReference type="DrugCentral" id="P04179"/>
<dbReference type="Allergome" id="784">
    <property type="allergen name" value="Hom s MnSOD"/>
</dbReference>
<dbReference type="GlyGen" id="P04179">
    <property type="glycosylation" value="2 sites, 2 N-linked glycans (1 site), 1 O-linked glycan (1 site)"/>
</dbReference>
<dbReference type="iPTMnet" id="P04179"/>
<dbReference type="PhosphoSitePlus" id="P04179"/>
<dbReference type="SwissPalm" id="P04179"/>
<dbReference type="BioMuta" id="SOD2"/>
<dbReference type="DMDM" id="134665"/>
<dbReference type="OGP" id="P04179"/>
<dbReference type="jPOST" id="P04179"/>
<dbReference type="MassIVE" id="P04179"/>
<dbReference type="PaxDb" id="9606-ENSP00000446252"/>
<dbReference type="PeptideAtlas" id="P04179"/>
<dbReference type="ProteomicsDB" id="3715"/>
<dbReference type="ProteomicsDB" id="51669">
    <molecule id="P04179-1"/>
</dbReference>
<dbReference type="ProteomicsDB" id="51670">
    <molecule id="P04179-2"/>
</dbReference>
<dbReference type="ProteomicsDB" id="5907"/>
<dbReference type="Pumba" id="P04179"/>
<dbReference type="TopDownProteomics" id="P04179-1">
    <molecule id="P04179-1"/>
</dbReference>
<dbReference type="TopDownProteomics" id="P04179-2">
    <molecule id="P04179-2"/>
</dbReference>
<dbReference type="Antibodypedia" id="785">
    <property type="antibodies" value="1054 antibodies from 49 providers"/>
</dbReference>
<dbReference type="DNASU" id="6648"/>
<dbReference type="Ensembl" id="ENST00000337404.8">
    <molecule id="P04179-2"/>
    <property type="protein sequence ID" value="ENSP00000337127.4"/>
    <property type="gene ID" value="ENSG00000291237.1"/>
</dbReference>
<dbReference type="Ensembl" id="ENST00000367054.6">
    <molecule id="P04179-2"/>
    <property type="protein sequence ID" value="ENSP00000356021.2"/>
    <property type="gene ID" value="ENSG00000291237.1"/>
</dbReference>
<dbReference type="Ensembl" id="ENST00000367055.8">
    <molecule id="P04179-1"/>
    <property type="protein sequence ID" value="ENSP00000356022.4"/>
    <property type="gene ID" value="ENSG00000291237.1"/>
</dbReference>
<dbReference type="Ensembl" id="ENST00000444946.6">
    <molecule id="P04179-3"/>
    <property type="protein sequence ID" value="ENSP00000404804.2"/>
    <property type="gene ID" value="ENSG00000291237.1"/>
</dbReference>
<dbReference type="Ensembl" id="ENST00000538183.7">
    <molecule id="P04179-1"/>
    <property type="protein sequence ID" value="ENSP00000446252.1"/>
    <property type="gene ID" value="ENSG00000291237.1"/>
</dbReference>
<dbReference type="Ensembl" id="ENST00000546087.5">
    <molecule id="P04179-4"/>
    <property type="protein sequence ID" value="ENSP00000442920.1"/>
    <property type="gene ID" value="ENSG00000291237.1"/>
</dbReference>
<dbReference type="GeneID" id="6648"/>
<dbReference type="KEGG" id="hsa:6648"/>
<dbReference type="MANE-Select" id="ENST00000538183.7">
    <property type="protein sequence ID" value="ENSP00000446252.1"/>
    <property type="RefSeq nucleotide sequence ID" value="NM_000636.4"/>
    <property type="RefSeq protein sequence ID" value="NP_000627.2"/>
</dbReference>
<dbReference type="UCSC" id="uc003qsf.6">
    <molecule id="P04179-1"/>
    <property type="organism name" value="human"/>
</dbReference>
<dbReference type="AGR" id="HGNC:11180"/>
<dbReference type="CTD" id="6648"/>
<dbReference type="DisGeNET" id="6648"/>
<dbReference type="GeneCards" id="SOD2"/>
<dbReference type="HGNC" id="HGNC:11180">
    <property type="gene designation" value="SOD2"/>
</dbReference>
<dbReference type="HPA" id="ENSG00000291237">
    <property type="expression patterns" value="Tissue enhanced (bone)"/>
</dbReference>
<dbReference type="MalaCards" id="SOD2"/>
<dbReference type="MIM" id="147460">
    <property type="type" value="gene"/>
</dbReference>
<dbReference type="MIM" id="612634">
    <property type="type" value="phenotype"/>
</dbReference>
<dbReference type="neXtProt" id="NX_P04179"/>
<dbReference type="PharmGKB" id="PA36017"/>
<dbReference type="VEuPathDB" id="HostDB:ENSG00000112096"/>
<dbReference type="eggNOG" id="KOG0876">
    <property type="taxonomic scope" value="Eukaryota"/>
</dbReference>
<dbReference type="GeneTree" id="ENSGT00390000011877"/>
<dbReference type="HOGENOM" id="CLU_031625_2_0_1"/>
<dbReference type="InParanoid" id="P04179"/>
<dbReference type="OMA" id="DSLINWD"/>
<dbReference type="PAN-GO" id="P04179">
    <property type="GO annotations" value="3 GO annotations based on evolutionary models"/>
</dbReference>
<dbReference type="PhylomeDB" id="P04179"/>
<dbReference type="TreeFam" id="TF105132"/>
<dbReference type="BioCyc" id="MetaCyc:HS03515-MONOMER"/>
<dbReference type="BRENDA" id="1.15.1.1">
    <property type="organism ID" value="2681"/>
</dbReference>
<dbReference type="PathwayCommons" id="P04179"/>
<dbReference type="Reactome" id="R-HSA-2151201">
    <property type="pathway name" value="Transcriptional activation of mitochondrial biogenesis"/>
</dbReference>
<dbReference type="Reactome" id="R-HSA-3299685">
    <property type="pathway name" value="Detoxification of Reactive Oxygen Species"/>
</dbReference>
<dbReference type="Reactome" id="R-HSA-8862803">
    <property type="pathway name" value="Deregulated CDK5 triggers multiple neurodegenerative pathways in Alzheimer's disease models"/>
</dbReference>
<dbReference type="Reactome" id="R-HSA-8950505">
    <property type="pathway name" value="Gene and protein expression by JAK-STAT signaling after Interleukin-12 stimulation"/>
</dbReference>
<dbReference type="Reactome" id="R-HSA-9615017">
    <property type="pathway name" value="FOXO-mediated transcription of oxidative stress, metabolic and neuronal genes"/>
</dbReference>
<dbReference type="Reactome" id="R-HSA-9841251">
    <property type="pathway name" value="Mitochondrial unfolded protein response (UPRmt)"/>
</dbReference>
<dbReference type="SABIO-RK" id="P04179"/>
<dbReference type="SignaLink" id="P04179"/>
<dbReference type="SIGNOR" id="P04179"/>
<dbReference type="BioGRID-ORCS" id="6648">
    <property type="hits" value="551 hits in 1158 CRISPR screens"/>
</dbReference>
<dbReference type="ChiTaRS" id="SOD2">
    <property type="organism name" value="human"/>
</dbReference>
<dbReference type="EvolutionaryTrace" id="P04179"/>
<dbReference type="GeneWiki" id="SOD2"/>
<dbReference type="GenomeRNAi" id="6648"/>
<dbReference type="Pharos" id="P04179">
    <property type="development level" value="Tbio"/>
</dbReference>
<dbReference type="PRO" id="PR:P04179"/>
<dbReference type="Proteomes" id="UP000005640">
    <property type="component" value="Chromosome 6"/>
</dbReference>
<dbReference type="RNAct" id="P04179">
    <property type="molecule type" value="protein"/>
</dbReference>
<dbReference type="Bgee" id="ENSG00000112096">
    <property type="expression patterns" value="Expressed in gastrocnemius and 204 other cell types or tissues"/>
</dbReference>
<dbReference type="ExpressionAtlas" id="P04179">
    <property type="expression patterns" value="baseline and differential"/>
</dbReference>
<dbReference type="GO" id="GO:0070062">
    <property type="term" value="C:extracellular exosome"/>
    <property type="evidence" value="ECO:0007005"/>
    <property type="project" value="UniProtKB"/>
</dbReference>
<dbReference type="GO" id="GO:0005759">
    <property type="term" value="C:mitochondrial matrix"/>
    <property type="evidence" value="ECO:0000314"/>
    <property type="project" value="UniProtKB"/>
</dbReference>
<dbReference type="GO" id="GO:0042645">
    <property type="term" value="C:mitochondrial nucleoid"/>
    <property type="evidence" value="ECO:0007669"/>
    <property type="project" value="Ensembl"/>
</dbReference>
<dbReference type="GO" id="GO:0005739">
    <property type="term" value="C:mitochondrion"/>
    <property type="evidence" value="ECO:0000314"/>
    <property type="project" value="BHF-UCL"/>
</dbReference>
<dbReference type="GO" id="GO:0003677">
    <property type="term" value="F:DNA binding"/>
    <property type="evidence" value="ECO:0007669"/>
    <property type="project" value="Ensembl"/>
</dbReference>
<dbReference type="GO" id="GO:0019899">
    <property type="term" value="F:enzyme binding"/>
    <property type="evidence" value="ECO:0007669"/>
    <property type="project" value="Ensembl"/>
</dbReference>
<dbReference type="GO" id="GO:0042802">
    <property type="term" value="F:identical protein binding"/>
    <property type="evidence" value="ECO:0000353"/>
    <property type="project" value="IntAct"/>
</dbReference>
<dbReference type="GO" id="GO:0030145">
    <property type="term" value="F:manganese ion binding"/>
    <property type="evidence" value="ECO:0000314"/>
    <property type="project" value="UniProtKB"/>
</dbReference>
<dbReference type="GO" id="GO:0019825">
    <property type="term" value="F:oxygen binding"/>
    <property type="evidence" value="ECO:0007669"/>
    <property type="project" value="Ensembl"/>
</dbReference>
<dbReference type="GO" id="GO:0004784">
    <property type="term" value="F:superoxide dismutase activity"/>
    <property type="evidence" value="ECO:0000314"/>
    <property type="project" value="UniProtKB"/>
</dbReference>
<dbReference type="GO" id="GO:0003069">
    <property type="term" value="P:acetylcholine-mediated vasodilation involved in regulation of systemic arterial blood pressure"/>
    <property type="evidence" value="ECO:0000250"/>
    <property type="project" value="BHF-UCL"/>
</dbReference>
<dbReference type="GO" id="GO:0071361">
    <property type="term" value="P:cellular response to ethanol"/>
    <property type="evidence" value="ECO:0007669"/>
    <property type="project" value="Ensembl"/>
</dbReference>
<dbReference type="GO" id="GO:0034599">
    <property type="term" value="P:cellular response to oxidative stress"/>
    <property type="evidence" value="ECO:0000315"/>
    <property type="project" value="GO_Central"/>
</dbReference>
<dbReference type="GO" id="GO:0003032">
    <property type="term" value="P:detection of oxygen"/>
    <property type="evidence" value="ECO:0007669"/>
    <property type="project" value="Ensembl"/>
</dbReference>
<dbReference type="GO" id="GO:0048773">
    <property type="term" value="P:erythrophore differentiation"/>
    <property type="evidence" value="ECO:0007669"/>
    <property type="project" value="Ensembl"/>
</dbReference>
<dbReference type="GO" id="GO:0006749">
    <property type="term" value="P:glutathione metabolic process"/>
    <property type="evidence" value="ECO:0007669"/>
    <property type="project" value="Ensembl"/>
</dbReference>
<dbReference type="GO" id="GO:0007507">
    <property type="term" value="P:heart development"/>
    <property type="evidence" value="ECO:0007669"/>
    <property type="project" value="Ensembl"/>
</dbReference>
<dbReference type="GO" id="GO:0030097">
    <property type="term" value="P:hemopoiesis"/>
    <property type="evidence" value="ECO:0007669"/>
    <property type="project" value="Ensembl"/>
</dbReference>
<dbReference type="GO" id="GO:0050665">
    <property type="term" value="P:hydrogen peroxide biosynthetic process"/>
    <property type="evidence" value="ECO:0007669"/>
    <property type="project" value="Ensembl"/>
</dbReference>
<dbReference type="GO" id="GO:0032364">
    <property type="term" value="P:intracellular oxygen homeostasis"/>
    <property type="evidence" value="ECO:0000315"/>
    <property type="project" value="BHF-UCL"/>
</dbReference>
<dbReference type="GO" id="GO:0008630">
    <property type="term" value="P:intrinsic apoptotic signaling pathway in response to DNA damage"/>
    <property type="evidence" value="ECO:0007669"/>
    <property type="project" value="Ensembl"/>
</dbReference>
<dbReference type="GO" id="GO:0008631">
    <property type="term" value="P:intrinsic apoptotic signaling pathway in response to oxidative stress"/>
    <property type="evidence" value="ECO:0007669"/>
    <property type="project" value="Ensembl"/>
</dbReference>
<dbReference type="GO" id="GO:0001889">
    <property type="term" value="P:liver development"/>
    <property type="evidence" value="ECO:0007669"/>
    <property type="project" value="Ensembl"/>
</dbReference>
<dbReference type="GO" id="GO:0007626">
    <property type="term" value="P:locomotory behavior"/>
    <property type="evidence" value="ECO:0007669"/>
    <property type="project" value="Ensembl"/>
</dbReference>
<dbReference type="GO" id="GO:0060586">
    <property type="term" value="P:multicellular organismal-level iron ion homeostasis"/>
    <property type="evidence" value="ECO:0007669"/>
    <property type="project" value="Ensembl"/>
</dbReference>
<dbReference type="GO" id="GO:0008285">
    <property type="term" value="P:negative regulation of cell population proliferation"/>
    <property type="evidence" value="ECO:0000315"/>
    <property type="project" value="BHF-UCL"/>
</dbReference>
<dbReference type="GO" id="GO:0045599">
    <property type="term" value="P:negative regulation of fat cell differentiation"/>
    <property type="evidence" value="ECO:0007669"/>
    <property type="project" value="Ensembl"/>
</dbReference>
<dbReference type="GO" id="GO:0048147">
    <property type="term" value="P:negative regulation of fibroblast proliferation"/>
    <property type="evidence" value="ECO:0007669"/>
    <property type="project" value="Ensembl"/>
</dbReference>
<dbReference type="GO" id="GO:1902631">
    <property type="term" value="P:negative regulation of membrane hyperpolarization"/>
    <property type="evidence" value="ECO:0007669"/>
    <property type="project" value="Ensembl"/>
</dbReference>
<dbReference type="GO" id="GO:0043524">
    <property type="term" value="P:negative regulation of neuron apoptotic process"/>
    <property type="evidence" value="ECO:0000316"/>
    <property type="project" value="BHF-UCL"/>
</dbReference>
<dbReference type="GO" id="GO:1902176">
    <property type="term" value="P:negative regulation of oxidative stress-induced intrinsic apoptotic signaling pathway"/>
    <property type="evidence" value="ECO:0000315"/>
    <property type="project" value="BHF-UCL"/>
</dbReference>
<dbReference type="GO" id="GO:1904706">
    <property type="term" value="P:negative regulation of vascular associated smooth muscle cell proliferation"/>
    <property type="evidence" value="ECO:0000314"/>
    <property type="project" value="BHF-UCL"/>
</dbReference>
<dbReference type="GO" id="GO:0048666">
    <property type="term" value="P:neuron development"/>
    <property type="evidence" value="ECO:0007669"/>
    <property type="project" value="Ensembl"/>
</dbReference>
<dbReference type="GO" id="GO:0030335">
    <property type="term" value="P:positive regulation of cell migration"/>
    <property type="evidence" value="ECO:0000315"/>
    <property type="project" value="BHF-UCL"/>
</dbReference>
<dbReference type="GO" id="GO:0010729">
    <property type="term" value="P:positive regulation of hydrogen peroxide biosynthetic process"/>
    <property type="evidence" value="ECO:0007669"/>
    <property type="project" value="Ensembl"/>
</dbReference>
<dbReference type="GO" id="GO:0045429">
    <property type="term" value="P:positive regulation of nitric oxide biosynthetic process"/>
    <property type="evidence" value="ECO:0007669"/>
    <property type="project" value="Ensembl"/>
</dbReference>
<dbReference type="GO" id="GO:1905461">
    <property type="term" value="P:positive regulation of vascular associated smooth muscle cell apoptotic process"/>
    <property type="evidence" value="ECO:0000314"/>
    <property type="project" value="BHF-UCL"/>
</dbReference>
<dbReference type="GO" id="GO:1905932">
    <property type="term" value="P:positive regulation of vascular associated smooth muscle cell differentiation involved in phenotypic switching"/>
    <property type="evidence" value="ECO:0000314"/>
    <property type="project" value="BHF-UCL"/>
</dbReference>
<dbReference type="GO" id="GO:0009791">
    <property type="term" value="P:post-embryonic development"/>
    <property type="evidence" value="ECO:0007669"/>
    <property type="project" value="Ensembl"/>
</dbReference>
<dbReference type="GO" id="GO:0051289">
    <property type="term" value="P:protein homotetramerization"/>
    <property type="evidence" value="ECO:0000353"/>
    <property type="project" value="UniProtKB"/>
</dbReference>
<dbReference type="GO" id="GO:0008217">
    <property type="term" value="P:regulation of blood pressure"/>
    <property type="evidence" value="ECO:0000250"/>
    <property type="project" value="BHF-UCL"/>
</dbReference>
<dbReference type="GO" id="GO:0051881">
    <property type="term" value="P:regulation of mitochondrial membrane potential"/>
    <property type="evidence" value="ECO:0007669"/>
    <property type="project" value="Ensembl"/>
</dbReference>
<dbReference type="GO" id="GO:0006357">
    <property type="term" value="P:regulation of transcription by RNA polymerase II"/>
    <property type="evidence" value="ECO:0000315"/>
    <property type="project" value="UniProtKB"/>
</dbReference>
<dbReference type="GO" id="GO:0001836">
    <property type="term" value="P:release of cytochrome c from mitochondria"/>
    <property type="evidence" value="ECO:0000250"/>
    <property type="project" value="BHF-UCL"/>
</dbReference>
<dbReference type="GO" id="GO:0019430">
    <property type="term" value="P:removal of superoxide radicals"/>
    <property type="evidence" value="ECO:0000315"/>
    <property type="project" value="BHF-UCL"/>
</dbReference>
<dbReference type="GO" id="GO:0022904">
    <property type="term" value="P:respiratory electron transport chain"/>
    <property type="evidence" value="ECO:0007669"/>
    <property type="project" value="Ensembl"/>
</dbReference>
<dbReference type="GO" id="GO:0014823">
    <property type="term" value="P:response to activity"/>
    <property type="evidence" value="ECO:0007669"/>
    <property type="project" value="Ensembl"/>
</dbReference>
<dbReference type="GO" id="GO:0048678">
    <property type="term" value="P:response to axon injury"/>
    <property type="evidence" value="ECO:0007669"/>
    <property type="project" value="Ensembl"/>
</dbReference>
<dbReference type="GO" id="GO:0046686">
    <property type="term" value="P:response to cadmium ion"/>
    <property type="evidence" value="ECO:0007669"/>
    <property type="project" value="Ensembl"/>
</dbReference>
<dbReference type="GO" id="GO:0051602">
    <property type="term" value="P:response to electrical stimulus"/>
    <property type="evidence" value="ECO:0007669"/>
    <property type="project" value="Ensembl"/>
</dbReference>
<dbReference type="GO" id="GO:0010332">
    <property type="term" value="P:response to gamma radiation"/>
    <property type="evidence" value="ECO:0007669"/>
    <property type="project" value="Ensembl"/>
</dbReference>
<dbReference type="GO" id="GO:0042542">
    <property type="term" value="P:response to hydrogen peroxide"/>
    <property type="evidence" value="ECO:0007669"/>
    <property type="project" value="Ensembl"/>
</dbReference>
<dbReference type="GO" id="GO:0055093">
    <property type="term" value="P:response to hyperoxia"/>
    <property type="evidence" value="ECO:0007669"/>
    <property type="project" value="Ensembl"/>
</dbReference>
<dbReference type="GO" id="GO:0001666">
    <property type="term" value="P:response to hypoxia"/>
    <property type="evidence" value="ECO:0007669"/>
    <property type="project" value="Ensembl"/>
</dbReference>
<dbReference type="GO" id="GO:0035902">
    <property type="term" value="P:response to immobilization stress"/>
    <property type="evidence" value="ECO:0007669"/>
    <property type="project" value="Ensembl"/>
</dbReference>
<dbReference type="GO" id="GO:0035900">
    <property type="term" value="P:response to isolation stress"/>
    <property type="evidence" value="ECO:0007669"/>
    <property type="project" value="Ensembl"/>
</dbReference>
<dbReference type="GO" id="GO:0033591">
    <property type="term" value="P:response to L-ascorbic acid"/>
    <property type="evidence" value="ECO:0007669"/>
    <property type="project" value="Ensembl"/>
</dbReference>
<dbReference type="GO" id="GO:0032496">
    <property type="term" value="P:response to lipopolysaccharide"/>
    <property type="evidence" value="ECO:0007669"/>
    <property type="project" value="Ensembl"/>
</dbReference>
<dbReference type="GO" id="GO:0071000">
    <property type="term" value="P:response to magnetism"/>
    <property type="evidence" value="ECO:0007669"/>
    <property type="project" value="Ensembl"/>
</dbReference>
<dbReference type="GO" id="GO:0010042">
    <property type="term" value="P:response to manganese ion"/>
    <property type="evidence" value="ECO:0007669"/>
    <property type="project" value="Ensembl"/>
</dbReference>
<dbReference type="GO" id="GO:0010269">
    <property type="term" value="P:response to selenium ion"/>
    <property type="evidence" value="ECO:0007669"/>
    <property type="project" value="Ensembl"/>
</dbReference>
<dbReference type="GO" id="GO:0034021">
    <property type="term" value="P:response to silicon dioxide"/>
    <property type="evidence" value="ECO:0007669"/>
    <property type="project" value="Ensembl"/>
</dbReference>
<dbReference type="GO" id="GO:0000303">
    <property type="term" value="P:response to superoxide"/>
    <property type="evidence" value="ECO:0000315"/>
    <property type="project" value="BHF-UCL"/>
</dbReference>
<dbReference type="GO" id="GO:0009410">
    <property type="term" value="P:response to xenobiotic stimulus"/>
    <property type="evidence" value="ECO:0007669"/>
    <property type="project" value="Ensembl"/>
</dbReference>
<dbReference type="GO" id="GO:0010043">
    <property type="term" value="P:response to zinc ion"/>
    <property type="evidence" value="ECO:0007669"/>
    <property type="project" value="Ensembl"/>
</dbReference>
<dbReference type="GO" id="GO:0042554">
    <property type="term" value="P:superoxide anion generation"/>
    <property type="evidence" value="ECO:0007669"/>
    <property type="project" value="Ensembl"/>
</dbReference>
<dbReference type="GO" id="GO:0006801">
    <property type="term" value="P:superoxide metabolic process"/>
    <property type="evidence" value="ECO:0000314"/>
    <property type="project" value="UniProtKB"/>
</dbReference>
<dbReference type="FunFam" id="1.10.287.990:FF:000001">
    <property type="entry name" value="Superoxide dismutase"/>
    <property type="match status" value="1"/>
</dbReference>
<dbReference type="FunFam" id="3.55.40.20:FF:000003">
    <property type="entry name" value="Superoxide dismutase [Mn], mitochondrial"/>
    <property type="match status" value="1"/>
</dbReference>
<dbReference type="Gene3D" id="1.10.287.990">
    <property type="entry name" value="Fe,Mn superoxide dismutase (SOD) domain"/>
    <property type="match status" value="1"/>
</dbReference>
<dbReference type="Gene3D" id="3.55.40.20">
    <property type="entry name" value="Iron/manganese superoxide dismutase, C-terminal domain"/>
    <property type="match status" value="1"/>
</dbReference>
<dbReference type="InterPro" id="IPR050265">
    <property type="entry name" value="Fe/Mn_Superoxide_Dismutase"/>
</dbReference>
<dbReference type="InterPro" id="IPR001189">
    <property type="entry name" value="Mn/Fe_SOD"/>
</dbReference>
<dbReference type="InterPro" id="IPR019833">
    <property type="entry name" value="Mn/Fe_SOD_BS"/>
</dbReference>
<dbReference type="InterPro" id="IPR019832">
    <property type="entry name" value="Mn/Fe_SOD_C"/>
</dbReference>
<dbReference type="InterPro" id="IPR019831">
    <property type="entry name" value="Mn/Fe_SOD_N"/>
</dbReference>
<dbReference type="InterPro" id="IPR036324">
    <property type="entry name" value="Mn/Fe_SOD_N_sf"/>
</dbReference>
<dbReference type="InterPro" id="IPR036314">
    <property type="entry name" value="SOD_C_sf"/>
</dbReference>
<dbReference type="PANTHER" id="PTHR11404">
    <property type="entry name" value="SUPEROXIDE DISMUTASE 2"/>
    <property type="match status" value="1"/>
</dbReference>
<dbReference type="PANTHER" id="PTHR11404:SF41">
    <property type="entry name" value="SUPEROXIDE DISMUTASE [MN], MITOCHONDRIAL"/>
    <property type="match status" value="1"/>
</dbReference>
<dbReference type="Pfam" id="PF02777">
    <property type="entry name" value="Sod_Fe_C"/>
    <property type="match status" value="1"/>
</dbReference>
<dbReference type="Pfam" id="PF00081">
    <property type="entry name" value="Sod_Fe_N"/>
    <property type="match status" value="1"/>
</dbReference>
<dbReference type="PIRSF" id="PIRSF000349">
    <property type="entry name" value="SODismutase"/>
    <property type="match status" value="1"/>
</dbReference>
<dbReference type="PRINTS" id="PR01703">
    <property type="entry name" value="MNSODISMTASE"/>
</dbReference>
<dbReference type="SUPFAM" id="SSF54719">
    <property type="entry name" value="Fe,Mn superoxide dismutase (SOD), C-terminal domain"/>
    <property type="match status" value="1"/>
</dbReference>
<dbReference type="SUPFAM" id="SSF46609">
    <property type="entry name" value="Fe,Mn superoxide dismutase (SOD), N-terminal domain"/>
    <property type="match status" value="1"/>
</dbReference>
<dbReference type="PROSITE" id="PS00088">
    <property type="entry name" value="SOD_MN"/>
    <property type="match status" value="1"/>
</dbReference>
<proteinExistence type="evidence at protein level"/>
<name>SODM_HUMAN</name>
<evidence type="ECO:0000250" key="1">
    <source>
        <dbReference type="UniProtKB" id="P09671"/>
    </source>
</evidence>
<evidence type="ECO:0000269" key="2">
    <source>
    </source>
</evidence>
<evidence type="ECO:0000269" key="3">
    <source>
    </source>
</evidence>
<evidence type="ECO:0000269" key="4">
    <source>
    </source>
</evidence>
<evidence type="ECO:0000269" key="5">
    <source>
    </source>
</evidence>
<evidence type="ECO:0000269" key="6">
    <source>
    </source>
</evidence>
<evidence type="ECO:0000269" key="7">
    <source>
    </source>
</evidence>
<evidence type="ECO:0000269" key="8">
    <source>
    </source>
</evidence>
<evidence type="ECO:0000269" key="9">
    <source>
    </source>
</evidence>
<evidence type="ECO:0000269" key="10">
    <source>
    </source>
</evidence>
<evidence type="ECO:0000269" key="11">
    <source>
    </source>
</evidence>
<evidence type="ECO:0000269" key="12">
    <source>
    </source>
</evidence>
<evidence type="ECO:0000269" key="13">
    <source>
    </source>
</evidence>
<evidence type="ECO:0000269" key="14">
    <source>
    </source>
</evidence>
<evidence type="ECO:0000269" key="15">
    <source>
    </source>
</evidence>
<evidence type="ECO:0000269" key="16">
    <source>
    </source>
</evidence>
<evidence type="ECO:0000269" key="17">
    <source>
    </source>
</evidence>
<evidence type="ECO:0000269" key="18">
    <source>
    </source>
</evidence>
<evidence type="ECO:0000269" key="19">
    <source ref="9"/>
</evidence>
<evidence type="ECO:0000303" key="20">
    <source>
    </source>
</evidence>
<evidence type="ECO:0000305" key="21"/>
<evidence type="ECO:0000312" key="22">
    <source>
        <dbReference type="PDB" id="1JA8"/>
    </source>
</evidence>
<evidence type="ECO:0007744" key="23">
    <source>
        <dbReference type="PDB" id="1AP5"/>
    </source>
</evidence>
<evidence type="ECO:0007744" key="24">
    <source>
        <dbReference type="PDB" id="1AP6"/>
    </source>
</evidence>
<evidence type="ECO:0007744" key="25">
    <source>
        <dbReference type="PDB" id="1EM1"/>
    </source>
</evidence>
<evidence type="ECO:0007744" key="26">
    <source>
        <dbReference type="PDB" id="1JA8"/>
    </source>
</evidence>
<evidence type="ECO:0007744" key="27">
    <source>
        <dbReference type="PDB" id="1N0J"/>
    </source>
</evidence>
<evidence type="ECO:0007744" key="28">
    <source>
        <dbReference type="PDB" id="1QNM"/>
    </source>
</evidence>
<evidence type="ECO:0007744" key="29">
    <source>
        <dbReference type="PDB" id="1VAR"/>
    </source>
</evidence>
<evidence type="ECO:0007744" key="30">
    <source>
        <dbReference type="PDB" id="1ZSP"/>
    </source>
</evidence>
<evidence type="ECO:0007744" key="31">
    <source>
        <dbReference type="PDB" id="1ZTE"/>
    </source>
</evidence>
<evidence type="ECO:0007744" key="32">
    <source>
        <dbReference type="PDB" id="1ZUQ"/>
    </source>
</evidence>
<evidence type="ECO:0007744" key="33">
    <source>
        <dbReference type="PDB" id="2P4K"/>
    </source>
</evidence>
<evidence type="ECO:0007744" key="34">
    <source>
    </source>
</evidence>
<evidence type="ECO:0007829" key="35">
    <source>
        <dbReference type="PDB" id="1PL4"/>
    </source>
</evidence>
<feature type="transit peptide" description="Mitochondrion" evidence="12 13 14 16">
    <location>
        <begin position="1"/>
        <end position="24"/>
    </location>
</feature>
<feature type="chain" id="PRO_0000032869" description="Superoxide dismutase [Mn], mitochondrial">
    <location>
        <begin position="25"/>
        <end position="222"/>
    </location>
</feature>
<feature type="binding site" evidence="3 4 6 9 17 18 22 23 24 25 27 28 30 31 32 33">
    <location>
        <position position="50"/>
    </location>
    <ligand>
        <name>Mn(2+)</name>
        <dbReference type="ChEBI" id="CHEBI:29035"/>
    </ligand>
</feature>
<feature type="binding site" evidence="3 4 6 9 17 18 22 23 24 25 27 28 30 31 32 33">
    <location>
        <position position="98"/>
    </location>
    <ligand>
        <name>Mn(2+)</name>
        <dbReference type="ChEBI" id="CHEBI:29035"/>
    </ligand>
</feature>
<feature type="binding site" evidence="3 4 6 9 17 18 22 23 24 25 27 28 30 31 32 33">
    <location>
        <position position="183"/>
    </location>
    <ligand>
        <name>Mn(2+)</name>
        <dbReference type="ChEBI" id="CHEBI:29035"/>
    </ligand>
</feature>
<feature type="binding site" evidence="3 4 6 9 17 18 22 23 24 25 27 28 30 31 32 33">
    <location>
        <position position="187"/>
    </location>
    <ligand>
        <name>Mn(2+)</name>
        <dbReference type="ChEBI" id="CHEBI:29035"/>
    </ligand>
</feature>
<feature type="modified residue" description="3'-nitrotyrosine" evidence="2 7">
    <location>
        <position position="58"/>
    </location>
</feature>
<feature type="modified residue" description="N6-acetyllysine; alternate" evidence="34">
    <location>
        <position position="68"/>
    </location>
</feature>
<feature type="modified residue" description="N6-succinyllysine; alternate" evidence="1">
    <location>
        <position position="68"/>
    </location>
</feature>
<feature type="modified residue" description="N6-acetyllysine; alternate" evidence="1">
    <location>
        <position position="75"/>
    </location>
</feature>
<feature type="modified residue" description="N6-succinyllysine; alternate" evidence="1">
    <location>
        <position position="75"/>
    </location>
</feature>
<feature type="modified residue" description="N6-acetyllysine" evidence="1">
    <location>
        <position position="114"/>
    </location>
</feature>
<feature type="modified residue" description="N6-acetyllysine; alternate" evidence="1">
    <location>
        <position position="122"/>
    </location>
</feature>
<feature type="modified residue" description="N6-succinyllysine; alternate" evidence="1">
    <location>
        <position position="122"/>
    </location>
</feature>
<feature type="modified residue" description="N6-acetyllysine; alternate" evidence="34">
    <location>
        <position position="130"/>
    </location>
</feature>
<feature type="modified residue" description="N6-succinyllysine; alternate" evidence="1">
    <location>
        <position position="130"/>
    </location>
</feature>
<feature type="modified residue" description="N6-acetyllysine" evidence="1">
    <location>
        <position position="202"/>
    </location>
</feature>
<feature type="splice variant" id="VSP_053761" description="In isoform 4." evidence="20">
    <location>
        <begin position="1"/>
        <end position="46"/>
    </location>
</feature>
<feature type="splice variant" id="VSP_042558" description="In isoform 2." evidence="20">
    <location>
        <begin position="75"/>
        <end position="113"/>
    </location>
</feature>
<feature type="splice variant" id="VSP_053762" description="In isoform 3." evidence="20">
    <location>
        <begin position="115"/>
        <end position="174"/>
    </location>
</feature>
<feature type="sequence variant" id="VAR_019363" description="In dbSNP:rs5746096." evidence="19">
    <original>S</original>
    <variation>I</variation>
    <location>
        <position position="10"/>
    </location>
</feature>
<feature type="sequence variant" id="VAR_016183" description="Associated with a decreased susceptibility to diabetic nephropathy in Japanese and Chinese patients with type 2 diabetes; dbSNP:rs4880." evidence="5 8">
    <original>V</original>
    <variation>A</variation>
    <location>
        <position position="16"/>
    </location>
</feature>
<feature type="sequence variant" id="VAR_019364" description="In dbSNP:rs5746097." evidence="19">
    <original>E</original>
    <variation>V</variation>
    <location>
        <position position="66"/>
    </location>
</feature>
<feature type="sequence variant" id="VAR_025898" description="In dbSNP:rs4987023.">
    <original>G</original>
    <variation>R</variation>
    <location>
        <position position="76"/>
    </location>
</feature>
<feature type="sequence variant" id="VAR_007165" description="In dbSNP:rs1141718." evidence="15">
    <original>I</original>
    <variation>T</variation>
    <location>
        <position position="82"/>
    </location>
</feature>
<feature type="sequence variant" id="VAR_019365" description="In dbSNP:rs5746129." evidence="19">
    <original>R</original>
    <variation>W</variation>
    <location>
        <position position="156"/>
    </location>
</feature>
<feature type="mutagenesis site" description="Reduced enzyme activity." evidence="2">
    <original>Y</original>
    <variation>A</variation>
    <variation>H</variation>
    <variation>N</variation>
    <variation>V</variation>
    <variation>F</variation>
    <location>
        <position position="58"/>
    </location>
</feature>
<feature type="mutagenesis site" description="Loss of nitration. Enhanced dityrosine formation on peroxynitrite treatment." evidence="2">
    <original>Y</original>
    <variation>F</variation>
    <location>
        <position position="58"/>
    </location>
</feature>
<feature type="sequence conflict" description="In Ref. 3." evidence="21" ref="3">
    <original>A</original>
    <variation>P</variation>
    <location>
        <position position="14"/>
    </location>
</feature>
<feature type="sequence conflict" description="In Ref. 5; CAA42066/CAA33228." evidence="21" ref="5">
    <original>T</original>
    <variation>N</variation>
    <location>
        <position position="65"/>
    </location>
</feature>
<feature type="sequence conflict" description="In Ref. 6." evidence="21" ref="6">
    <original>E</original>
    <variation>Q</variation>
    <location>
        <position position="66"/>
    </location>
</feature>
<feature type="sequence conflict" description="In Ref. 6." evidence="21" ref="6">
    <original>E</original>
    <variation>Q</variation>
    <location>
        <position position="112"/>
    </location>
</feature>
<feature type="sequence conflict" description="In Ref. 3; CAA30687." evidence="21" ref="3">
    <original>R</original>
    <variation>L</variation>
    <location>
        <position position="123"/>
    </location>
</feature>
<feature type="sequence conflict" description="In Ref. 6." evidence="21" ref="6">
    <original>E</original>
    <variation>Q</variation>
    <location>
        <position position="133"/>
    </location>
</feature>
<feature type="sequence conflict" description="In Ref. 6." evidence="21" ref="6">
    <location>
        <begin position="148"/>
        <end position="149"/>
    </location>
</feature>
<feature type="sequence conflict" description="In Ref. 2; CAA68533 and 6." evidence="21" ref="2 6">
    <original>E</original>
    <variation>Q</variation>
    <location>
        <position position="155"/>
    </location>
</feature>
<feature type="turn" evidence="35">
    <location>
        <begin position="35"/>
        <end position="41"/>
    </location>
</feature>
<feature type="helix" evidence="35">
    <location>
        <begin position="44"/>
        <end position="52"/>
    </location>
</feature>
<feature type="helix" evidence="35">
    <location>
        <begin position="54"/>
        <end position="74"/>
    </location>
</feature>
<feature type="helix" evidence="35">
    <location>
        <begin position="78"/>
        <end position="83"/>
    </location>
</feature>
<feature type="helix" evidence="35">
    <location>
        <begin position="85"/>
        <end position="103"/>
    </location>
</feature>
<feature type="helix" evidence="35">
    <location>
        <begin position="115"/>
        <end position="125"/>
    </location>
</feature>
<feature type="helix" evidence="35">
    <location>
        <begin position="128"/>
        <end position="140"/>
    </location>
</feature>
<feature type="strand" evidence="35">
    <location>
        <begin position="144"/>
        <end position="153"/>
    </location>
</feature>
<feature type="turn" evidence="35">
    <location>
        <begin position="154"/>
        <end position="157"/>
    </location>
</feature>
<feature type="strand" evidence="35">
    <location>
        <begin position="158"/>
        <end position="165"/>
    </location>
</feature>
<feature type="helix" evidence="35">
    <location>
        <begin position="170"/>
        <end position="174"/>
    </location>
</feature>
<feature type="strand" evidence="35">
    <location>
        <begin position="177"/>
        <end position="183"/>
    </location>
</feature>
<feature type="helix" evidence="35">
    <location>
        <begin position="186"/>
        <end position="188"/>
    </location>
</feature>
<feature type="helix" evidence="35">
    <location>
        <begin position="190"/>
        <end position="193"/>
    </location>
</feature>
<feature type="helix" evidence="35">
    <location>
        <begin position="197"/>
        <end position="204"/>
    </location>
</feature>
<feature type="helix" evidence="35">
    <location>
        <begin position="205"/>
        <end position="207"/>
    </location>
</feature>
<feature type="helix" evidence="35">
    <location>
        <begin position="210"/>
        <end position="219"/>
    </location>
</feature>
<organism>
    <name type="scientific">Homo sapiens</name>
    <name type="common">Human</name>
    <dbReference type="NCBI Taxonomy" id="9606"/>
    <lineage>
        <taxon>Eukaryota</taxon>
        <taxon>Metazoa</taxon>
        <taxon>Chordata</taxon>
        <taxon>Craniata</taxon>
        <taxon>Vertebrata</taxon>
        <taxon>Euteleostomi</taxon>
        <taxon>Mammalia</taxon>
        <taxon>Eutheria</taxon>
        <taxon>Euarchontoglires</taxon>
        <taxon>Primates</taxon>
        <taxon>Haplorrhini</taxon>
        <taxon>Catarrhini</taxon>
        <taxon>Hominidae</taxon>
        <taxon>Homo</taxon>
    </lineage>
</organism>